<feature type="chain" id="PRO_0000151921" description="ATP phosphoribosyltransferase">
    <location>
        <begin position="1"/>
        <end position="208"/>
    </location>
</feature>
<comment type="function">
    <text evidence="1">Catalyzes the condensation of ATP and 5-phosphoribose 1-diphosphate to form N'-(5'-phosphoribosyl)-ATP (PR-ATP). Has a crucial role in the pathway because the rate of histidine biosynthesis seems to be controlled primarily by regulation of HisG enzymatic activity.</text>
</comment>
<comment type="catalytic activity">
    <reaction evidence="1">
        <text>1-(5-phospho-beta-D-ribosyl)-ATP + diphosphate = 5-phospho-alpha-D-ribose 1-diphosphate + ATP</text>
        <dbReference type="Rhea" id="RHEA:18473"/>
        <dbReference type="ChEBI" id="CHEBI:30616"/>
        <dbReference type="ChEBI" id="CHEBI:33019"/>
        <dbReference type="ChEBI" id="CHEBI:58017"/>
        <dbReference type="ChEBI" id="CHEBI:73183"/>
        <dbReference type="EC" id="2.4.2.17"/>
    </reaction>
</comment>
<comment type="pathway">
    <text evidence="1">Amino-acid biosynthesis; L-histidine biosynthesis; L-histidine from 5-phospho-alpha-D-ribose 1-diphosphate: step 1/9.</text>
</comment>
<comment type="subunit">
    <text evidence="1">Heteromultimer composed of HisG and HisZ subunits.</text>
</comment>
<comment type="subcellular location">
    <subcellularLocation>
        <location evidence="1">Cytoplasm</location>
    </subcellularLocation>
</comment>
<comment type="domain">
    <text>Lacks the C-terminal regulatory region which is replaced by HisZ.</text>
</comment>
<comment type="similarity">
    <text evidence="1">Belongs to the ATP phosphoribosyltransferase family. Short subfamily.</text>
</comment>
<accession>Q8ESR7</accession>
<evidence type="ECO:0000255" key="1">
    <source>
        <dbReference type="HAMAP-Rule" id="MF_01018"/>
    </source>
</evidence>
<organism>
    <name type="scientific">Oceanobacillus iheyensis (strain DSM 14371 / CIP 107618 / JCM 11309 / KCTC 3954 / HTE831)</name>
    <dbReference type="NCBI Taxonomy" id="221109"/>
    <lineage>
        <taxon>Bacteria</taxon>
        <taxon>Bacillati</taxon>
        <taxon>Bacillota</taxon>
        <taxon>Bacilli</taxon>
        <taxon>Bacillales</taxon>
        <taxon>Bacillaceae</taxon>
        <taxon>Oceanobacillus</taxon>
    </lineage>
</organism>
<sequence>MQPVTIALAKGRPAKQTIKLLQAAGLTFEELDATSRKLVFYNEDRTARVIFLKGMDVPIYVEKGAADIGIVGKDNIIESQAEVYELLDLGIGKCKFSIAAKQGVTLSSDNEITIATKYPIVAKRYFSKRNQSIDVVKLNGSVELAPLIGLADYIVDIVETGNTLRENGLEILEDIETISTKAIVNKASFATRSAEIQSIINRLSTVVG</sequence>
<keyword id="KW-0028">Amino-acid biosynthesis</keyword>
<keyword id="KW-0067">ATP-binding</keyword>
<keyword id="KW-0963">Cytoplasm</keyword>
<keyword id="KW-0328">Glycosyltransferase</keyword>
<keyword id="KW-0368">Histidine biosynthesis</keyword>
<keyword id="KW-0547">Nucleotide-binding</keyword>
<keyword id="KW-1185">Reference proteome</keyword>
<keyword id="KW-0808">Transferase</keyword>
<dbReference type="EC" id="2.4.2.17" evidence="1"/>
<dbReference type="EMBL" id="BA000028">
    <property type="protein sequence ID" value="BAC12508.1"/>
    <property type="molecule type" value="Genomic_DNA"/>
</dbReference>
<dbReference type="RefSeq" id="WP_011064955.1">
    <property type="nucleotide sequence ID" value="NC_004193.1"/>
</dbReference>
<dbReference type="SMR" id="Q8ESR7"/>
<dbReference type="STRING" id="221109.gene:10732756"/>
<dbReference type="KEGG" id="oih:OB0552"/>
<dbReference type="eggNOG" id="COG0040">
    <property type="taxonomic scope" value="Bacteria"/>
</dbReference>
<dbReference type="HOGENOM" id="CLU_038115_2_0_9"/>
<dbReference type="OrthoDB" id="9801867at2"/>
<dbReference type="PhylomeDB" id="Q8ESR7"/>
<dbReference type="UniPathway" id="UPA00031">
    <property type="reaction ID" value="UER00006"/>
</dbReference>
<dbReference type="Proteomes" id="UP000000822">
    <property type="component" value="Chromosome"/>
</dbReference>
<dbReference type="GO" id="GO:0005737">
    <property type="term" value="C:cytoplasm"/>
    <property type="evidence" value="ECO:0007669"/>
    <property type="project" value="UniProtKB-SubCell"/>
</dbReference>
<dbReference type="GO" id="GO:0005524">
    <property type="term" value="F:ATP binding"/>
    <property type="evidence" value="ECO:0007669"/>
    <property type="project" value="UniProtKB-KW"/>
</dbReference>
<dbReference type="GO" id="GO:0003879">
    <property type="term" value="F:ATP phosphoribosyltransferase activity"/>
    <property type="evidence" value="ECO:0007669"/>
    <property type="project" value="UniProtKB-UniRule"/>
</dbReference>
<dbReference type="GO" id="GO:0000105">
    <property type="term" value="P:L-histidine biosynthetic process"/>
    <property type="evidence" value="ECO:0007669"/>
    <property type="project" value="UniProtKB-UniRule"/>
</dbReference>
<dbReference type="CDD" id="cd13595">
    <property type="entry name" value="PBP2_HisGs"/>
    <property type="match status" value="1"/>
</dbReference>
<dbReference type="FunFam" id="3.40.190.10:FF:000008">
    <property type="entry name" value="ATP phosphoribosyltransferase"/>
    <property type="match status" value="1"/>
</dbReference>
<dbReference type="Gene3D" id="3.40.190.10">
    <property type="entry name" value="Periplasmic binding protein-like II"/>
    <property type="match status" value="2"/>
</dbReference>
<dbReference type="HAMAP" id="MF_01018">
    <property type="entry name" value="HisG_Short"/>
    <property type="match status" value="1"/>
</dbReference>
<dbReference type="InterPro" id="IPR013820">
    <property type="entry name" value="ATP_PRibTrfase_cat"/>
</dbReference>
<dbReference type="InterPro" id="IPR018198">
    <property type="entry name" value="ATP_PRibTrfase_CS"/>
</dbReference>
<dbReference type="InterPro" id="IPR001348">
    <property type="entry name" value="ATP_PRibTrfase_HisG"/>
</dbReference>
<dbReference type="InterPro" id="IPR024893">
    <property type="entry name" value="ATP_PRibTrfase_HisG_short"/>
</dbReference>
<dbReference type="NCBIfam" id="TIGR00070">
    <property type="entry name" value="hisG"/>
    <property type="match status" value="1"/>
</dbReference>
<dbReference type="PANTHER" id="PTHR21403:SF8">
    <property type="entry name" value="ATP PHOSPHORIBOSYLTRANSFERASE"/>
    <property type="match status" value="1"/>
</dbReference>
<dbReference type="PANTHER" id="PTHR21403">
    <property type="entry name" value="ATP PHOSPHORIBOSYLTRANSFERASE ATP-PRTASE"/>
    <property type="match status" value="1"/>
</dbReference>
<dbReference type="Pfam" id="PF01634">
    <property type="entry name" value="HisG"/>
    <property type="match status" value="1"/>
</dbReference>
<dbReference type="SUPFAM" id="SSF53850">
    <property type="entry name" value="Periplasmic binding protein-like II"/>
    <property type="match status" value="1"/>
</dbReference>
<dbReference type="PROSITE" id="PS01316">
    <property type="entry name" value="ATP_P_PHORIBOSYLTR"/>
    <property type="match status" value="1"/>
</dbReference>
<name>HIS1_OCEIH</name>
<proteinExistence type="inferred from homology"/>
<protein>
    <recommendedName>
        <fullName evidence="1">ATP phosphoribosyltransferase</fullName>
        <shortName evidence="1">ATP-PRT</shortName>
        <shortName evidence="1">ATP-PRTase</shortName>
        <ecNumber evidence="1">2.4.2.17</ecNumber>
    </recommendedName>
</protein>
<reference key="1">
    <citation type="journal article" date="2002" name="Nucleic Acids Res.">
        <title>Genome sequence of Oceanobacillus iheyensis isolated from the Iheya Ridge and its unexpected adaptive capabilities to extreme environments.</title>
        <authorList>
            <person name="Takami H."/>
            <person name="Takaki Y."/>
            <person name="Uchiyama I."/>
        </authorList>
    </citation>
    <scope>NUCLEOTIDE SEQUENCE [LARGE SCALE GENOMIC DNA]</scope>
    <source>
        <strain>DSM 14371 / CIP 107618 / JCM 11309 / KCTC 3954 / HTE831</strain>
    </source>
</reference>
<gene>
    <name evidence="1" type="primary">hisG</name>
    <name type="ordered locus">OB0552</name>
</gene>